<protein>
    <recommendedName>
        <fullName evidence="1">3-methyl-2-oxobutanoate hydroxymethyltransferase</fullName>
        <ecNumber evidence="1">2.1.2.11</ecNumber>
    </recommendedName>
    <alternativeName>
        <fullName evidence="1">Ketopantoate hydroxymethyltransferase</fullName>
        <shortName evidence="1">KPHMT</shortName>
    </alternativeName>
</protein>
<name>PANB_BACAH</name>
<sequence>MKTKTDFLKMKEQGEPITMLTAYDYPSAKLAEEAEVDMILVGDSLGMVVLGYDSTVPVTVEDMIHHTKAVRRGAKETFIVTDMPFMSYHVSLQDTMVNARRIVQESGAHALKVEGAGEVISTIHYLTNAGIPVVAHLGLTPQSVGVLGGYKVQGKDAESAKKLIEDAKKCEEAGAIALVLECVPMQLAELISEQLTIPTIGIGAGQKVDGQVLVYHDLISYGVNRVPKFVKQYTSVQEEIVRGISQYVAEVKTRQFPEEKHSFTMKEEECLALYGGKQS</sequence>
<reference key="1">
    <citation type="journal article" date="2007" name="J. Bacteriol.">
        <title>The complete genome sequence of Bacillus thuringiensis Al Hakam.</title>
        <authorList>
            <person name="Challacombe J.F."/>
            <person name="Altherr M.R."/>
            <person name="Xie G."/>
            <person name="Bhotika S.S."/>
            <person name="Brown N."/>
            <person name="Bruce D."/>
            <person name="Campbell C.S."/>
            <person name="Campbell M.L."/>
            <person name="Chen J."/>
            <person name="Chertkov O."/>
            <person name="Cleland C."/>
            <person name="Dimitrijevic M."/>
            <person name="Doggett N.A."/>
            <person name="Fawcett J.J."/>
            <person name="Glavina T."/>
            <person name="Goodwin L.A."/>
            <person name="Green L.D."/>
            <person name="Han C.S."/>
            <person name="Hill K.K."/>
            <person name="Hitchcock P."/>
            <person name="Jackson P.J."/>
            <person name="Keim P."/>
            <person name="Kewalramani A.R."/>
            <person name="Longmire J."/>
            <person name="Lucas S."/>
            <person name="Malfatti S."/>
            <person name="Martinez D."/>
            <person name="McMurry K."/>
            <person name="Meincke L.J."/>
            <person name="Misra M."/>
            <person name="Moseman B.L."/>
            <person name="Mundt M."/>
            <person name="Munk A.C."/>
            <person name="Okinaka R.T."/>
            <person name="Parson-Quintana B."/>
            <person name="Reilly L.P."/>
            <person name="Richardson P."/>
            <person name="Robinson D.L."/>
            <person name="Saunders E."/>
            <person name="Tapia R."/>
            <person name="Tesmer J.G."/>
            <person name="Thayer N."/>
            <person name="Thompson L.S."/>
            <person name="Tice H."/>
            <person name="Ticknor L.O."/>
            <person name="Wills P.L."/>
            <person name="Gilna P."/>
            <person name="Brettin T.S."/>
        </authorList>
    </citation>
    <scope>NUCLEOTIDE SEQUENCE [LARGE SCALE GENOMIC DNA]</scope>
    <source>
        <strain>Al Hakam</strain>
    </source>
</reference>
<proteinExistence type="inferred from homology"/>
<accession>A0RBZ2</accession>
<comment type="function">
    <text evidence="1">Catalyzes the reversible reaction in which hydroxymethyl group from 5,10-methylenetetrahydrofolate is transferred onto alpha-ketoisovalerate to form ketopantoate.</text>
</comment>
<comment type="catalytic activity">
    <reaction evidence="1">
        <text>3-methyl-2-oxobutanoate + (6R)-5,10-methylene-5,6,7,8-tetrahydrofolate + H2O = 2-dehydropantoate + (6S)-5,6,7,8-tetrahydrofolate</text>
        <dbReference type="Rhea" id="RHEA:11824"/>
        <dbReference type="ChEBI" id="CHEBI:11561"/>
        <dbReference type="ChEBI" id="CHEBI:11851"/>
        <dbReference type="ChEBI" id="CHEBI:15377"/>
        <dbReference type="ChEBI" id="CHEBI:15636"/>
        <dbReference type="ChEBI" id="CHEBI:57453"/>
        <dbReference type="EC" id="2.1.2.11"/>
    </reaction>
</comment>
<comment type="cofactor">
    <cofactor evidence="1">
        <name>Mg(2+)</name>
        <dbReference type="ChEBI" id="CHEBI:18420"/>
    </cofactor>
    <text evidence="1">Binds 1 Mg(2+) ion per subunit.</text>
</comment>
<comment type="pathway">
    <text evidence="1">Cofactor biosynthesis; (R)-pantothenate biosynthesis; (R)-pantoate from 3-methyl-2-oxobutanoate: step 1/2.</text>
</comment>
<comment type="subunit">
    <text evidence="1">Homodecamer; pentamer of dimers.</text>
</comment>
<comment type="subcellular location">
    <subcellularLocation>
        <location evidence="1">Cytoplasm</location>
    </subcellularLocation>
</comment>
<comment type="similarity">
    <text evidence="1">Belongs to the PanB family.</text>
</comment>
<feature type="chain" id="PRO_0000297221" description="3-methyl-2-oxobutanoate hydroxymethyltransferase">
    <location>
        <begin position="1"/>
        <end position="279"/>
    </location>
</feature>
<feature type="active site" description="Proton acceptor" evidence="1">
    <location>
        <position position="181"/>
    </location>
</feature>
<feature type="binding site" evidence="1">
    <location>
        <begin position="43"/>
        <end position="44"/>
    </location>
    <ligand>
        <name>3-methyl-2-oxobutanoate</name>
        <dbReference type="ChEBI" id="CHEBI:11851"/>
    </ligand>
</feature>
<feature type="binding site" evidence="1">
    <location>
        <position position="43"/>
    </location>
    <ligand>
        <name>Mg(2+)</name>
        <dbReference type="ChEBI" id="CHEBI:18420"/>
    </ligand>
</feature>
<feature type="binding site" evidence="1">
    <location>
        <position position="82"/>
    </location>
    <ligand>
        <name>3-methyl-2-oxobutanoate</name>
        <dbReference type="ChEBI" id="CHEBI:11851"/>
    </ligand>
</feature>
<feature type="binding site" evidence="1">
    <location>
        <position position="82"/>
    </location>
    <ligand>
        <name>Mg(2+)</name>
        <dbReference type="ChEBI" id="CHEBI:18420"/>
    </ligand>
</feature>
<feature type="binding site" evidence="1">
    <location>
        <position position="112"/>
    </location>
    <ligand>
        <name>3-methyl-2-oxobutanoate</name>
        <dbReference type="ChEBI" id="CHEBI:11851"/>
    </ligand>
</feature>
<feature type="binding site" evidence="1">
    <location>
        <position position="114"/>
    </location>
    <ligand>
        <name>Mg(2+)</name>
        <dbReference type="ChEBI" id="CHEBI:18420"/>
    </ligand>
</feature>
<evidence type="ECO:0000255" key="1">
    <source>
        <dbReference type="HAMAP-Rule" id="MF_00156"/>
    </source>
</evidence>
<organism>
    <name type="scientific">Bacillus thuringiensis (strain Al Hakam)</name>
    <dbReference type="NCBI Taxonomy" id="412694"/>
    <lineage>
        <taxon>Bacteria</taxon>
        <taxon>Bacillati</taxon>
        <taxon>Bacillota</taxon>
        <taxon>Bacilli</taxon>
        <taxon>Bacillales</taxon>
        <taxon>Bacillaceae</taxon>
        <taxon>Bacillus</taxon>
        <taxon>Bacillus cereus group</taxon>
    </lineage>
</organism>
<gene>
    <name evidence="1" type="primary">panB</name>
    <name type="ordered locus">BALH_1392</name>
</gene>
<keyword id="KW-0963">Cytoplasm</keyword>
<keyword id="KW-0460">Magnesium</keyword>
<keyword id="KW-0479">Metal-binding</keyword>
<keyword id="KW-0566">Pantothenate biosynthesis</keyword>
<keyword id="KW-0808">Transferase</keyword>
<dbReference type="EC" id="2.1.2.11" evidence="1"/>
<dbReference type="EMBL" id="CP000485">
    <property type="protein sequence ID" value="ABK84735.1"/>
    <property type="molecule type" value="Genomic_DNA"/>
</dbReference>
<dbReference type="RefSeq" id="WP_000851103.1">
    <property type="nucleotide sequence ID" value="NC_008600.1"/>
</dbReference>
<dbReference type="SMR" id="A0RBZ2"/>
<dbReference type="GeneID" id="45021534"/>
<dbReference type="KEGG" id="btl:BALH_1392"/>
<dbReference type="HOGENOM" id="CLU_036645_1_0_9"/>
<dbReference type="UniPathway" id="UPA00028">
    <property type="reaction ID" value="UER00003"/>
</dbReference>
<dbReference type="GO" id="GO:0005737">
    <property type="term" value="C:cytoplasm"/>
    <property type="evidence" value="ECO:0007669"/>
    <property type="project" value="UniProtKB-SubCell"/>
</dbReference>
<dbReference type="GO" id="GO:0003864">
    <property type="term" value="F:3-methyl-2-oxobutanoate hydroxymethyltransferase activity"/>
    <property type="evidence" value="ECO:0007669"/>
    <property type="project" value="UniProtKB-UniRule"/>
</dbReference>
<dbReference type="GO" id="GO:0000287">
    <property type="term" value="F:magnesium ion binding"/>
    <property type="evidence" value="ECO:0007669"/>
    <property type="project" value="TreeGrafter"/>
</dbReference>
<dbReference type="GO" id="GO:0015940">
    <property type="term" value="P:pantothenate biosynthetic process"/>
    <property type="evidence" value="ECO:0007669"/>
    <property type="project" value="UniProtKB-UniRule"/>
</dbReference>
<dbReference type="CDD" id="cd06557">
    <property type="entry name" value="KPHMT-like"/>
    <property type="match status" value="1"/>
</dbReference>
<dbReference type="FunFam" id="3.20.20.60:FF:000003">
    <property type="entry name" value="3-methyl-2-oxobutanoate hydroxymethyltransferase"/>
    <property type="match status" value="1"/>
</dbReference>
<dbReference type="Gene3D" id="3.20.20.60">
    <property type="entry name" value="Phosphoenolpyruvate-binding domains"/>
    <property type="match status" value="1"/>
</dbReference>
<dbReference type="HAMAP" id="MF_00156">
    <property type="entry name" value="PanB"/>
    <property type="match status" value="1"/>
</dbReference>
<dbReference type="InterPro" id="IPR003700">
    <property type="entry name" value="Pantoate_hydroxy_MeTrfase"/>
</dbReference>
<dbReference type="InterPro" id="IPR015813">
    <property type="entry name" value="Pyrv/PenolPyrv_kinase-like_dom"/>
</dbReference>
<dbReference type="InterPro" id="IPR040442">
    <property type="entry name" value="Pyrv_kinase-like_dom_sf"/>
</dbReference>
<dbReference type="NCBIfam" id="TIGR00222">
    <property type="entry name" value="panB"/>
    <property type="match status" value="1"/>
</dbReference>
<dbReference type="NCBIfam" id="NF001452">
    <property type="entry name" value="PRK00311.1"/>
    <property type="match status" value="1"/>
</dbReference>
<dbReference type="PANTHER" id="PTHR20881">
    <property type="entry name" value="3-METHYL-2-OXOBUTANOATE HYDROXYMETHYLTRANSFERASE"/>
    <property type="match status" value="1"/>
</dbReference>
<dbReference type="PANTHER" id="PTHR20881:SF0">
    <property type="entry name" value="3-METHYL-2-OXOBUTANOATE HYDROXYMETHYLTRANSFERASE"/>
    <property type="match status" value="1"/>
</dbReference>
<dbReference type="Pfam" id="PF02548">
    <property type="entry name" value="Pantoate_transf"/>
    <property type="match status" value="1"/>
</dbReference>
<dbReference type="PIRSF" id="PIRSF000388">
    <property type="entry name" value="Pantoate_hydroxy_MeTrfase"/>
    <property type="match status" value="1"/>
</dbReference>
<dbReference type="SUPFAM" id="SSF51621">
    <property type="entry name" value="Phosphoenolpyruvate/pyruvate domain"/>
    <property type="match status" value="1"/>
</dbReference>